<dbReference type="EC" id="4.1.1.11" evidence="1"/>
<dbReference type="EMBL" id="AE002098">
    <property type="protein sequence ID" value="AAF41658.1"/>
    <property type="molecule type" value="Genomic_DNA"/>
</dbReference>
<dbReference type="PIR" id="A81100">
    <property type="entry name" value="A81100"/>
</dbReference>
<dbReference type="RefSeq" id="NP_274302.1">
    <property type="nucleotide sequence ID" value="NC_003112.2"/>
</dbReference>
<dbReference type="RefSeq" id="WP_002217080.1">
    <property type="nucleotide sequence ID" value="NC_003112.2"/>
</dbReference>
<dbReference type="SMR" id="Q9JZ56"/>
<dbReference type="FunCoup" id="Q9JZ56">
    <property type="interactions" value="313"/>
</dbReference>
<dbReference type="STRING" id="122586.NMB1282"/>
<dbReference type="PaxDb" id="122586-NMB1282"/>
<dbReference type="GeneID" id="93385916"/>
<dbReference type="KEGG" id="nme:NMB1282"/>
<dbReference type="PATRIC" id="fig|122586.8.peg.1607"/>
<dbReference type="HOGENOM" id="CLU_115305_2_0_4"/>
<dbReference type="InParanoid" id="Q9JZ56"/>
<dbReference type="OrthoDB" id="9803983at2"/>
<dbReference type="UniPathway" id="UPA00028">
    <property type="reaction ID" value="UER00002"/>
</dbReference>
<dbReference type="Proteomes" id="UP000000425">
    <property type="component" value="Chromosome"/>
</dbReference>
<dbReference type="GO" id="GO:0005829">
    <property type="term" value="C:cytosol"/>
    <property type="evidence" value="ECO:0000318"/>
    <property type="project" value="GO_Central"/>
</dbReference>
<dbReference type="GO" id="GO:0004068">
    <property type="term" value="F:aspartate 1-decarboxylase activity"/>
    <property type="evidence" value="ECO:0000318"/>
    <property type="project" value="GO_Central"/>
</dbReference>
<dbReference type="GO" id="GO:0006523">
    <property type="term" value="P:alanine biosynthetic process"/>
    <property type="evidence" value="ECO:0000318"/>
    <property type="project" value="GO_Central"/>
</dbReference>
<dbReference type="GO" id="GO:0015940">
    <property type="term" value="P:pantothenate biosynthetic process"/>
    <property type="evidence" value="ECO:0000318"/>
    <property type="project" value="GO_Central"/>
</dbReference>
<dbReference type="CDD" id="cd06919">
    <property type="entry name" value="Asp_decarbox"/>
    <property type="match status" value="1"/>
</dbReference>
<dbReference type="Gene3D" id="2.40.40.20">
    <property type="match status" value="1"/>
</dbReference>
<dbReference type="HAMAP" id="MF_00446">
    <property type="entry name" value="PanD"/>
    <property type="match status" value="1"/>
</dbReference>
<dbReference type="InterPro" id="IPR009010">
    <property type="entry name" value="Asp_de-COase-like_dom_sf"/>
</dbReference>
<dbReference type="InterPro" id="IPR003190">
    <property type="entry name" value="Asp_decarbox"/>
</dbReference>
<dbReference type="NCBIfam" id="TIGR00223">
    <property type="entry name" value="panD"/>
    <property type="match status" value="1"/>
</dbReference>
<dbReference type="PANTHER" id="PTHR21012">
    <property type="entry name" value="ASPARTATE 1-DECARBOXYLASE"/>
    <property type="match status" value="1"/>
</dbReference>
<dbReference type="PANTHER" id="PTHR21012:SF0">
    <property type="entry name" value="ASPARTATE 1-DECARBOXYLASE"/>
    <property type="match status" value="1"/>
</dbReference>
<dbReference type="Pfam" id="PF02261">
    <property type="entry name" value="Asp_decarbox"/>
    <property type="match status" value="1"/>
</dbReference>
<dbReference type="PIRSF" id="PIRSF006246">
    <property type="entry name" value="Asp_decarbox"/>
    <property type="match status" value="1"/>
</dbReference>
<dbReference type="SUPFAM" id="SSF50692">
    <property type="entry name" value="ADC-like"/>
    <property type="match status" value="1"/>
</dbReference>
<reference key="1">
    <citation type="journal article" date="2000" name="Science">
        <title>Complete genome sequence of Neisseria meningitidis serogroup B strain MC58.</title>
        <authorList>
            <person name="Tettelin H."/>
            <person name="Saunders N.J."/>
            <person name="Heidelberg J.F."/>
            <person name="Jeffries A.C."/>
            <person name="Nelson K.E."/>
            <person name="Eisen J.A."/>
            <person name="Ketchum K.A."/>
            <person name="Hood D.W."/>
            <person name="Peden J.F."/>
            <person name="Dodson R.J."/>
            <person name="Nelson W.C."/>
            <person name="Gwinn M.L."/>
            <person name="DeBoy R.T."/>
            <person name="Peterson J.D."/>
            <person name="Hickey E.K."/>
            <person name="Haft D.H."/>
            <person name="Salzberg S.L."/>
            <person name="White O."/>
            <person name="Fleischmann R.D."/>
            <person name="Dougherty B.A."/>
            <person name="Mason T.M."/>
            <person name="Ciecko A."/>
            <person name="Parksey D.S."/>
            <person name="Blair E."/>
            <person name="Cittone H."/>
            <person name="Clark E.B."/>
            <person name="Cotton M.D."/>
            <person name="Utterback T.R."/>
            <person name="Khouri H.M."/>
            <person name="Qin H."/>
            <person name="Vamathevan J.J."/>
            <person name="Gill J."/>
            <person name="Scarlato V."/>
            <person name="Masignani V."/>
            <person name="Pizza M."/>
            <person name="Grandi G."/>
            <person name="Sun L."/>
            <person name="Smith H.O."/>
            <person name="Fraser C.M."/>
            <person name="Moxon E.R."/>
            <person name="Rappuoli R."/>
            <person name="Venter J.C."/>
        </authorList>
    </citation>
    <scope>NUCLEOTIDE SEQUENCE [LARGE SCALE GENOMIC DNA]</scope>
    <source>
        <strain>ATCC BAA-335 / MC58</strain>
    </source>
</reference>
<organism>
    <name type="scientific">Neisseria meningitidis serogroup B (strain ATCC BAA-335 / MC58)</name>
    <dbReference type="NCBI Taxonomy" id="122586"/>
    <lineage>
        <taxon>Bacteria</taxon>
        <taxon>Pseudomonadati</taxon>
        <taxon>Pseudomonadota</taxon>
        <taxon>Betaproteobacteria</taxon>
        <taxon>Neisseriales</taxon>
        <taxon>Neisseriaceae</taxon>
        <taxon>Neisseria</taxon>
    </lineage>
</organism>
<name>PAND_NEIMB</name>
<gene>
    <name evidence="1" type="primary">panD</name>
    <name type="ordered locus">NMB1282</name>
</gene>
<proteinExistence type="inferred from homology"/>
<comment type="function">
    <text evidence="1">Catalyzes the pyruvoyl-dependent decarboxylation of aspartate to produce beta-alanine.</text>
</comment>
<comment type="catalytic activity">
    <reaction evidence="1">
        <text>L-aspartate + H(+) = beta-alanine + CO2</text>
        <dbReference type="Rhea" id="RHEA:19497"/>
        <dbReference type="ChEBI" id="CHEBI:15378"/>
        <dbReference type="ChEBI" id="CHEBI:16526"/>
        <dbReference type="ChEBI" id="CHEBI:29991"/>
        <dbReference type="ChEBI" id="CHEBI:57966"/>
        <dbReference type="EC" id="4.1.1.11"/>
    </reaction>
</comment>
<comment type="cofactor">
    <cofactor evidence="1">
        <name>pyruvate</name>
        <dbReference type="ChEBI" id="CHEBI:15361"/>
    </cofactor>
    <text evidence="1">Binds 1 pyruvoyl group covalently per subunit.</text>
</comment>
<comment type="pathway">
    <text evidence="1">Cofactor biosynthesis; (R)-pantothenate biosynthesis; beta-alanine from L-aspartate: step 1/1.</text>
</comment>
<comment type="subunit">
    <text evidence="1">Heterooctamer of four alpha and four beta subunits.</text>
</comment>
<comment type="subcellular location">
    <subcellularLocation>
        <location evidence="1">Cytoplasm</location>
    </subcellularLocation>
</comment>
<comment type="PTM">
    <text evidence="1">Is synthesized initially as an inactive proenzyme, which is activated by self-cleavage at a specific serine bond to produce a beta-subunit with a hydroxyl group at its C-terminus and an alpha-subunit with a pyruvoyl group at its N-terminus.</text>
</comment>
<comment type="similarity">
    <text evidence="1">Belongs to the PanD family.</text>
</comment>
<accession>Q9JZ56</accession>
<evidence type="ECO:0000255" key="1">
    <source>
        <dbReference type="HAMAP-Rule" id="MF_00446"/>
    </source>
</evidence>
<sequence length="127" mass="13809">MFRTMLGGKIHRATVTEADLNYVGSITVDQDLLDAAGIYPNEKVAIVNNNNGERFETYTIAGKRGSGVICLNGAAARLVQKGDIVIIMSYVQLSEPEIAAHEPKVVLVDGNNKIRDIISYEPPHTVL</sequence>
<keyword id="KW-0068">Autocatalytic cleavage</keyword>
<keyword id="KW-0963">Cytoplasm</keyword>
<keyword id="KW-0210">Decarboxylase</keyword>
<keyword id="KW-0456">Lyase</keyword>
<keyword id="KW-0566">Pantothenate biosynthesis</keyword>
<keyword id="KW-0670">Pyruvate</keyword>
<keyword id="KW-1185">Reference proteome</keyword>
<keyword id="KW-0704">Schiff base</keyword>
<keyword id="KW-0865">Zymogen</keyword>
<feature type="chain" id="PRO_0000023127" description="Aspartate 1-decarboxylase beta chain" evidence="1">
    <location>
        <begin position="1"/>
        <end position="24"/>
    </location>
</feature>
<feature type="chain" id="PRO_0000023128" description="Aspartate 1-decarboxylase alpha chain" evidence="1">
    <location>
        <begin position="25"/>
        <end position="127"/>
    </location>
</feature>
<feature type="active site" description="Schiff-base intermediate with substrate; via pyruvic acid" evidence="1">
    <location>
        <position position="25"/>
    </location>
</feature>
<feature type="active site" description="Proton donor" evidence="1">
    <location>
        <position position="58"/>
    </location>
</feature>
<feature type="binding site" evidence="1">
    <location>
        <position position="57"/>
    </location>
    <ligand>
        <name>substrate</name>
    </ligand>
</feature>
<feature type="binding site" evidence="1">
    <location>
        <begin position="73"/>
        <end position="75"/>
    </location>
    <ligand>
        <name>substrate</name>
    </ligand>
</feature>
<feature type="modified residue" description="Pyruvic acid (Ser)" evidence="1">
    <location>
        <position position="25"/>
    </location>
</feature>
<protein>
    <recommendedName>
        <fullName evidence="1">Aspartate 1-decarboxylase</fullName>
        <ecNumber evidence="1">4.1.1.11</ecNumber>
    </recommendedName>
    <alternativeName>
        <fullName evidence="1">Aspartate alpha-decarboxylase</fullName>
    </alternativeName>
    <component>
        <recommendedName>
            <fullName evidence="1">Aspartate 1-decarboxylase beta chain</fullName>
        </recommendedName>
    </component>
    <component>
        <recommendedName>
            <fullName evidence="1">Aspartate 1-decarboxylase alpha chain</fullName>
        </recommendedName>
    </component>
</protein>